<comment type="function">
    <text evidence="1">Involved in peptide bond synthesis. Alleviates ribosome stalling that occurs when 3 or more consecutive Pro residues or the sequence PPG is present in a protein, possibly by augmenting the peptidyl transferase activity of the ribosome. Modification of Lys-34 is required for alleviation.</text>
</comment>
<comment type="pathway">
    <text evidence="1">Protein biosynthesis; polypeptide chain elongation.</text>
</comment>
<comment type="subcellular location">
    <subcellularLocation>
        <location evidence="1">Cytoplasm</location>
    </subcellularLocation>
</comment>
<comment type="PTM">
    <text evidence="1">Is beta-lysylated on the epsilon-amino group of Lys-34 by the combined action of EpmA and EpmB, and then hydroxylated on the C5 position of the same residue by EpmC. Lysylation is critical for the stimulatory effect of EF-P on peptide-bond formation. The lysylation moiety would extend toward the peptidyltransferase center and stabilize the terminal 3-CCA end of the tRNA. The hydroxylation of the C5 position on Lys-34 would allow additional potential stabilizing hydrogen-bond interactions with the P-tRNA.</text>
</comment>
<comment type="similarity">
    <text evidence="1">Belongs to the elongation factor P family.</text>
</comment>
<dbReference type="EMBL" id="CU928161">
    <property type="protein sequence ID" value="CAR05883.1"/>
    <property type="molecule type" value="Genomic_DNA"/>
</dbReference>
<dbReference type="RefSeq" id="WP_000257278.1">
    <property type="nucleotide sequence ID" value="NC_011742.1"/>
</dbReference>
<dbReference type="SMR" id="B7MKV2"/>
<dbReference type="GeneID" id="93777677"/>
<dbReference type="KEGG" id="ecz:ECS88_4733"/>
<dbReference type="HOGENOM" id="CLU_074944_0_0_6"/>
<dbReference type="UniPathway" id="UPA00345"/>
<dbReference type="Proteomes" id="UP000000747">
    <property type="component" value="Chromosome"/>
</dbReference>
<dbReference type="GO" id="GO:0005829">
    <property type="term" value="C:cytosol"/>
    <property type="evidence" value="ECO:0007669"/>
    <property type="project" value="UniProtKB-ARBA"/>
</dbReference>
<dbReference type="GO" id="GO:0003746">
    <property type="term" value="F:translation elongation factor activity"/>
    <property type="evidence" value="ECO:0007669"/>
    <property type="project" value="UniProtKB-UniRule"/>
</dbReference>
<dbReference type="GO" id="GO:0043043">
    <property type="term" value="P:peptide biosynthetic process"/>
    <property type="evidence" value="ECO:0007669"/>
    <property type="project" value="InterPro"/>
</dbReference>
<dbReference type="CDD" id="cd04470">
    <property type="entry name" value="S1_EF-P_repeat_1"/>
    <property type="match status" value="1"/>
</dbReference>
<dbReference type="CDD" id="cd05794">
    <property type="entry name" value="S1_EF-P_repeat_2"/>
    <property type="match status" value="1"/>
</dbReference>
<dbReference type="FunFam" id="2.30.30.30:FF:000003">
    <property type="entry name" value="Elongation factor P"/>
    <property type="match status" value="1"/>
</dbReference>
<dbReference type="FunFam" id="2.40.50.140:FF:000004">
    <property type="entry name" value="Elongation factor P"/>
    <property type="match status" value="1"/>
</dbReference>
<dbReference type="FunFam" id="2.40.50.140:FF:000009">
    <property type="entry name" value="Elongation factor P"/>
    <property type="match status" value="1"/>
</dbReference>
<dbReference type="Gene3D" id="2.30.30.30">
    <property type="match status" value="1"/>
</dbReference>
<dbReference type="Gene3D" id="2.40.50.140">
    <property type="entry name" value="Nucleic acid-binding proteins"/>
    <property type="match status" value="2"/>
</dbReference>
<dbReference type="HAMAP" id="MF_00141">
    <property type="entry name" value="EF_P"/>
    <property type="match status" value="1"/>
</dbReference>
<dbReference type="InterPro" id="IPR015365">
    <property type="entry name" value="Elong-fact-P_C"/>
</dbReference>
<dbReference type="InterPro" id="IPR012340">
    <property type="entry name" value="NA-bd_OB-fold"/>
</dbReference>
<dbReference type="InterPro" id="IPR014722">
    <property type="entry name" value="Rib_uL2_dom2"/>
</dbReference>
<dbReference type="InterPro" id="IPR020599">
    <property type="entry name" value="Transl_elong_fac_P/YeiP"/>
</dbReference>
<dbReference type="InterPro" id="IPR013185">
    <property type="entry name" value="Transl_elong_KOW-like"/>
</dbReference>
<dbReference type="InterPro" id="IPR001059">
    <property type="entry name" value="Transl_elong_P/YeiP_cen"/>
</dbReference>
<dbReference type="InterPro" id="IPR013852">
    <property type="entry name" value="Transl_elong_P/YeiP_CS"/>
</dbReference>
<dbReference type="InterPro" id="IPR011768">
    <property type="entry name" value="Transl_elongation_fac_P"/>
</dbReference>
<dbReference type="InterPro" id="IPR008991">
    <property type="entry name" value="Translation_prot_SH3-like_sf"/>
</dbReference>
<dbReference type="NCBIfam" id="TIGR00038">
    <property type="entry name" value="efp"/>
    <property type="match status" value="1"/>
</dbReference>
<dbReference type="NCBIfam" id="NF001810">
    <property type="entry name" value="PRK00529.1"/>
    <property type="match status" value="1"/>
</dbReference>
<dbReference type="PANTHER" id="PTHR30053">
    <property type="entry name" value="ELONGATION FACTOR P"/>
    <property type="match status" value="1"/>
</dbReference>
<dbReference type="PANTHER" id="PTHR30053:SF12">
    <property type="entry name" value="ELONGATION FACTOR P (EF-P) FAMILY PROTEIN"/>
    <property type="match status" value="1"/>
</dbReference>
<dbReference type="Pfam" id="PF01132">
    <property type="entry name" value="EFP"/>
    <property type="match status" value="1"/>
</dbReference>
<dbReference type="Pfam" id="PF08207">
    <property type="entry name" value="EFP_N"/>
    <property type="match status" value="1"/>
</dbReference>
<dbReference type="Pfam" id="PF09285">
    <property type="entry name" value="Elong-fact-P_C"/>
    <property type="match status" value="1"/>
</dbReference>
<dbReference type="PIRSF" id="PIRSF005901">
    <property type="entry name" value="EF-P"/>
    <property type="match status" value="1"/>
</dbReference>
<dbReference type="SMART" id="SM01185">
    <property type="entry name" value="EFP"/>
    <property type="match status" value="1"/>
</dbReference>
<dbReference type="SMART" id="SM00841">
    <property type="entry name" value="Elong-fact-P_C"/>
    <property type="match status" value="1"/>
</dbReference>
<dbReference type="SUPFAM" id="SSF50249">
    <property type="entry name" value="Nucleic acid-binding proteins"/>
    <property type="match status" value="2"/>
</dbReference>
<dbReference type="SUPFAM" id="SSF50104">
    <property type="entry name" value="Translation proteins SH3-like domain"/>
    <property type="match status" value="1"/>
</dbReference>
<dbReference type="PROSITE" id="PS01275">
    <property type="entry name" value="EFP"/>
    <property type="match status" value="1"/>
</dbReference>
<feature type="chain" id="PRO_1000117895" description="Elongation factor P">
    <location>
        <begin position="1"/>
        <end position="188"/>
    </location>
</feature>
<feature type="modified residue" description="N6-(3,6-diaminohexanoyl)-5-hydroxylysine" evidence="1">
    <location>
        <position position="34"/>
    </location>
</feature>
<organism>
    <name type="scientific">Escherichia coli O45:K1 (strain S88 / ExPEC)</name>
    <dbReference type="NCBI Taxonomy" id="585035"/>
    <lineage>
        <taxon>Bacteria</taxon>
        <taxon>Pseudomonadati</taxon>
        <taxon>Pseudomonadota</taxon>
        <taxon>Gammaproteobacteria</taxon>
        <taxon>Enterobacterales</taxon>
        <taxon>Enterobacteriaceae</taxon>
        <taxon>Escherichia</taxon>
    </lineage>
</organism>
<reference key="1">
    <citation type="journal article" date="2009" name="PLoS Genet.">
        <title>Organised genome dynamics in the Escherichia coli species results in highly diverse adaptive paths.</title>
        <authorList>
            <person name="Touchon M."/>
            <person name="Hoede C."/>
            <person name="Tenaillon O."/>
            <person name="Barbe V."/>
            <person name="Baeriswyl S."/>
            <person name="Bidet P."/>
            <person name="Bingen E."/>
            <person name="Bonacorsi S."/>
            <person name="Bouchier C."/>
            <person name="Bouvet O."/>
            <person name="Calteau A."/>
            <person name="Chiapello H."/>
            <person name="Clermont O."/>
            <person name="Cruveiller S."/>
            <person name="Danchin A."/>
            <person name="Diard M."/>
            <person name="Dossat C."/>
            <person name="Karoui M.E."/>
            <person name="Frapy E."/>
            <person name="Garry L."/>
            <person name="Ghigo J.M."/>
            <person name="Gilles A.M."/>
            <person name="Johnson J."/>
            <person name="Le Bouguenec C."/>
            <person name="Lescat M."/>
            <person name="Mangenot S."/>
            <person name="Martinez-Jehanne V."/>
            <person name="Matic I."/>
            <person name="Nassif X."/>
            <person name="Oztas S."/>
            <person name="Petit M.A."/>
            <person name="Pichon C."/>
            <person name="Rouy Z."/>
            <person name="Ruf C.S."/>
            <person name="Schneider D."/>
            <person name="Tourret J."/>
            <person name="Vacherie B."/>
            <person name="Vallenet D."/>
            <person name="Medigue C."/>
            <person name="Rocha E.P.C."/>
            <person name="Denamur E."/>
        </authorList>
    </citation>
    <scope>NUCLEOTIDE SEQUENCE [LARGE SCALE GENOMIC DNA]</scope>
    <source>
        <strain>S88 / ExPEC</strain>
    </source>
</reference>
<protein>
    <recommendedName>
        <fullName evidence="1">Elongation factor P</fullName>
        <shortName evidence="1">EF-P</shortName>
    </recommendedName>
</protein>
<sequence length="188" mass="20591">MATYYSNDFRAGLKIMLDGEPYAVEASEFVKPGKGQAFARVKLRRLLTGTRVEKTFKSTDSAEGADVVDMNLTYLYNDGEFWHFMNNETFEQLSADAKAIGDNAKWLLDQAECIVTLWNGQPISVTPPNFVELEIVDTDPGLKGDTAGTGGKPATLSTGAVVKVPLFVQIGEVIKVDTRSGEYVSRVK</sequence>
<name>EFP_ECO45</name>
<keyword id="KW-0963">Cytoplasm</keyword>
<keyword id="KW-0251">Elongation factor</keyword>
<keyword id="KW-0379">Hydroxylation</keyword>
<keyword id="KW-0648">Protein biosynthesis</keyword>
<keyword id="KW-1185">Reference proteome</keyword>
<accession>B7MKV2</accession>
<proteinExistence type="inferred from homology"/>
<evidence type="ECO:0000255" key="1">
    <source>
        <dbReference type="HAMAP-Rule" id="MF_00141"/>
    </source>
</evidence>
<gene>
    <name evidence="1" type="primary">efp</name>
    <name type="ordered locus">ECS88_4733</name>
</gene>